<proteinExistence type="inferred from homology"/>
<protein>
    <recommendedName>
        <fullName evidence="1">Threonine--tRNA ligase</fullName>
        <ecNumber evidence="1">6.1.1.3</ecNumber>
    </recommendedName>
    <alternativeName>
        <fullName evidence="1">Threonyl-tRNA synthetase</fullName>
        <shortName evidence="1">ThrRS</shortName>
    </alternativeName>
</protein>
<sequence>MPTITLPDGSQRSFDQAVSVADVALSIGAGLAKATVAGKVDGKLVDACDLIENDASLQIITPKDQEGLEIIRHSCAHLVGHAVKQLYPTAKMVIGPVIDDGFYYDIAYERPFTPDDMAAIEQRMQQLIEKDYDVIKKVTPRAEVIEVFTARHEDYKLRLVEDMPSEQAMGLYYHEEYVDMCRGPHVPNTRFLKSFKLTKLSGAYWRGDAKNEQLQRVYGTAWADKKQLAAYIQRIEEAEKRDHRKIGKRLGLFHTQEEAPGMVFWHPQGWTLYQVLEQYMRKVQRENGYLEIKTPQVVDRSLWEKSGHWANYADNMFTTESESRDYAIKPMNCPCHVQVFNQGLKSYRELPMRLAEFGACHRNEPSGALHGIMRVRGFTQDDAHIFCTEDQMQAESAAFIKLTLDVYADFGFKDIELKLSTRPEKRVGSDELWDRAESALASALDSAGLPYDLQPGEGAFYGPKIEFSLKDCLGRVWQCGTLQLDFNLPIRLSAEYVSEDNSRKNPVMLHRAILGSFERFIGILIEHYEGAFPAWLAPTQAVIMNITDKQADFALEVEKTLAESGFRAKSDLRNEKIGFKIREHTLLKVPYLLVIGDREVEMQTVAVRTREGADLGSMPVAQFAEFLAQAVSRRGRQDTE</sequence>
<accession>Q4ZUG7</accession>
<comment type="function">
    <text evidence="1">Catalyzes the attachment of threonine to tRNA(Thr) in a two-step reaction: L-threonine is first activated by ATP to form Thr-AMP and then transferred to the acceptor end of tRNA(Thr). Also edits incorrectly charged L-seryl-tRNA(Thr).</text>
</comment>
<comment type="catalytic activity">
    <reaction evidence="1">
        <text>tRNA(Thr) + L-threonine + ATP = L-threonyl-tRNA(Thr) + AMP + diphosphate + H(+)</text>
        <dbReference type="Rhea" id="RHEA:24624"/>
        <dbReference type="Rhea" id="RHEA-COMP:9670"/>
        <dbReference type="Rhea" id="RHEA-COMP:9704"/>
        <dbReference type="ChEBI" id="CHEBI:15378"/>
        <dbReference type="ChEBI" id="CHEBI:30616"/>
        <dbReference type="ChEBI" id="CHEBI:33019"/>
        <dbReference type="ChEBI" id="CHEBI:57926"/>
        <dbReference type="ChEBI" id="CHEBI:78442"/>
        <dbReference type="ChEBI" id="CHEBI:78534"/>
        <dbReference type="ChEBI" id="CHEBI:456215"/>
        <dbReference type="EC" id="6.1.1.3"/>
    </reaction>
</comment>
<comment type="cofactor">
    <cofactor evidence="1">
        <name>Zn(2+)</name>
        <dbReference type="ChEBI" id="CHEBI:29105"/>
    </cofactor>
    <text evidence="1">Binds 1 zinc ion per subunit.</text>
</comment>
<comment type="subunit">
    <text evidence="1">Homodimer.</text>
</comment>
<comment type="subcellular location">
    <subcellularLocation>
        <location evidence="1">Cytoplasm</location>
    </subcellularLocation>
</comment>
<comment type="similarity">
    <text evidence="1">Belongs to the class-II aminoacyl-tRNA synthetase family.</text>
</comment>
<dbReference type="EC" id="6.1.1.3" evidence="1"/>
<dbReference type="EMBL" id="CP000075">
    <property type="protein sequence ID" value="AAY37205.1"/>
    <property type="molecule type" value="Genomic_DNA"/>
</dbReference>
<dbReference type="RefSeq" id="WP_011267470.1">
    <property type="nucleotide sequence ID" value="NC_007005.1"/>
</dbReference>
<dbReference type="RefSeq" id="YP_235243.1">
    <property type="nucleotide sequence ID" value="NC_007005.1"/>
</dbReference>
<dbReference type="SMR" id="Q4ZUG7"/>
<dbReference type="STRING" id="205918.Psyr_2162"/>
<dbReference type="KEGG" id="psb:Psyr_2162"/>
<dbReference type="PATRIC" id="fig|205918.7.peg.2212"/>
<dbReference type="eggNOG" id="COG0441">
    <property type="taxonomic scope" value="Bacteria"/>
</dbReference>
<dbReference type="HOGENOM" id="CLU_008554_0_1_6"/>
<dbReference type="OrthoDB" id="9802304at2"/>
<dbReference type="Proteomes" id="UP000000426">
    <property type="component" value="Chromosome"/>
</dbReference>
<dbReference type="GO" id="GO:0005829">
    <property type="term" value="C:cytosol"/>
    <property type="evidence" value="ECO:0007669"/>
    <property type="project" value="TreeGrafter"/>
</dbReference>
<dbReference type="GO" id="GO:0005524">
    <property type="term" value="F:ATP binding"/>
    <property type="evidence" value="ECO:0007669"/>
    <property type="project" value="UniProtKB-UniRule"/>
</dbReference>
<dbReference type="GO" id="GO:0046872">
    <property type="term" value="F:metal ion binding"/>
    <property type="evidence" value="ECO:0007669"/>
    <property type="project" value="UniProtKB-KW"/>
</dbReference>
<dbReference type="GO" id="GO:0004829">
    <property type="term" value="F:threonine-tRNA ligase activity"/>
    <property type="evidence" value="ECO:0007669"/>
    <property type="project" value="UniProtKB-UniRule"/>
</dbReference>
<dbReference type="GO" id="GO:0000049">
    <property type="term" value="F:tRNA binding"/>
    <property type="evidence" value="ECO:0007669"/>
    <property type="project" value="UniProtKB-KW"/>
</dbReference>
<dbReference type="GO" id="GO:0006435">
    <property type="term" value="P:threonyl-tRNA aminoacylation"/>
    <property type="evidence" value="ECO:0007669"/>
    <property type="project" value="UniProtKB-UniRule"/>
</dbReference>
<dbReference type="CDD" id="cd01667">
    <property type="entry name" value="TGS_ThrRS"/>
    <property type="match status" value="1"/>
</dbReference>
<dbReference type="CDD" id="cd00860">
    <property type="entry name" value="ThrRS_anticodon"/>
    <property type="match status" value="1"/>
</dbReference>
<dbReference type="CDD" id="cd00771">
    <property type="entry name" value="ThrRS_core"/>
    <property type="match status" value="1"/>
</dbReference>
<dbReference type="FunFam" id="3.10.20.30:FF:000005">
    <property type="entry name" value="Threonine--tRNA ligase"/>
    <property type="match status" value="1"/>
</dbReference>
<dbReference type="FunFam" id="3.30.54.20:FF:000002">
    <property type="entry name" value="Threonine--tRNA ligase"/>
    <property type="match status" value="1"/>
</dbReference>
<dbReference type="FunFam" id="3.30.930.10:FF:000002">
    <property type="entry name" value="Threonine--tRNA ligase"/>
    <property type="match status" value="1"/>
</dbReference>
<dbReference type="FunFam" id="3.40.50.800:FF:000001">
    <property type="entry name" value="Threonine--tRNA ligase"/>
    <property type="match status" value="1"/>
</dbReference>
<dbReference type="FunFam" id="3.30.980.10:FF:000005">
    <property type="entry name" value="Threonyl-tRNA synthetase, mitochondrial"/>
    <property type="match status" value="1"/>
</dbReference>
<dbReference type="Gene3D" id="3.10.20.30">
    <property type="match status" value="1"/>
</dbReference>
<dbReference type="Gene3D" id="3.30.54.20">
    <property type="match status" value="1"/>
</dbReference>
<dbReference type="Gene3D" id="3.40.50.800">
    <property type="entry name" value="Anticodon-binding domain"/>
    <property type="match status" value="1"/>
</dbReference>
<dbReference type="Gene3D" id="3.30.930.10">
    <property type="entry name" value="Bira Bifunctional Protein, Domain 2"/>
    <property type="match status" value="1"/>
</dbReference>
<dbReference type="Gene3D" id="3.30.980.10">
    <property type="entry name" value="Threonyl-trna Synthetase, Chain A, domain 2"/>
    <property type="match status" value="1"/>
</dbReference>
<dbReference type="HAMAP" id="MF_00184">
    <property type="entry name" value="Thr_tRNA_synth"/>
    <property type="match status" value="1"/>
</dbReference>
<dbReference type="InterPro" id="IPR002314">
    <property type="entry name" value="aa-tRNA-synt_IIb"/>
</dbReference>
<dbReference type="InterPro" id="IPR006195">
    <property type="entry name" value="aa-tRNA-synth_II"/>
</dbReference>
<dbReference type="InterPro" id="IPR045864">
    <property type="entry name" value="aa-tRNA-synth_II/BPL/LPL"/>
</dbReference>
<dbReference type="InterPro" id="IPR004154">
    <property type="entry name" value="Anticodon-bd"/>
</dbReference>
<dbReference type="InterPro" id="IPR036621">
    <property type="entry name" value="Anticodon-bd_dom_sf"/>
</dbReference>
<dbReference type="InterPro" id="IPR012675">
    <property type="entry name" value="Beta-grasp_dom_sf"/>
</dbReference>
<dbReference type="InterPro" id="IPR004095">
    <property type="entry name" value="TGS"/>
</dbReference>
<dbReference type="InterPro" id="IPR012676">
    <property type="entry name" value="TGS-like"/>
</dbReference>
<dbReference type="InterPro" id="IPR002320">
    <property type="entry name" value="Thr-tRNA-ligase_IIa"/>
</dbReference>
<dbReference type="InterPro" id="IPR018163">
    <property type="entry name" value="Thr/Ala-tRNA-synth_IIc_edit"/>
</dbReference>
<dbReference type="InterPro" id="IPR047246">
    <property type="entry name" value="ThrRS_anticodon"/>
</dbReference>
<dbReference type="InterPro" id="IPR033728">
    <property type="entry name" value="ThrRS_core"/>
</dbReference>
<dbReference type="InterPro" id="IPR012947">
    <property type="entry name" value="tRNA_SAD"/>
</dbReference>
<dbReference type="NCBIfam" id="TIGR00418">
    <property type="entry name" value="thrS"/>
    <property type="match status" value="1"/>
</dbReference>
<dbReference type="PANTHER" id="PTHR11451:SF44">
    <property type="entry name" value="THREONINE--TRNA LIGASE, CHLOROPLASTIC_MITOCHONDRIAL 2"/>
    <property type="match status" value="1"/>
</dbReference>
<dbReference type="PANTHER" id="PTHR11451">
    <property type="entry name" value="THREONINE-TRNA LIGASE"/>
    <property type="match status" value="1"/>
</dbReference>
<dbReference type="Pfam" id="PF03129">
    <property type="entry name" value="HGTP_anticodon"/>
    <property type="match status" value="1"/>
</dbReference>
<dbReference type="Pfam" id="PF02824">
    <property type="entry name" value="TGS"/>
    <property type="match status" value="1"/>
</dbReference>
<dbReference type="Pfam" id="PF00587">
    <property type="entry name" value="tRNA-synt_2b"/>
    <property type="match status" value="1"/>
</dbReference>
<dbReference type="Pfam" id="PF07973">
    <property type="entry name" value="tRNA_SAD"/>
    <property type="match status" value="1"/>
</dbReference>
<dbReference type="PRINTS" id="PR01047">
    <property type="entry name" value="TRNASYNTHTHR"/>
</dbReference>
<dbReference type="SMART" id="SM00863">
    <property type="entry name" value="tRNA_SAD"/>
    <property type="match status" value="1"/>
</dbReference>
<dbReference type="SUPFAM" id="SSF52954">
    <property type="entry name" value="Class II aaRS ABD-related"/>
    <property type="match status" value="1"/>
</dbReference>
<dbReference type="SUPFAM" id="SSF55681">
    <property type="entry name" value="Class II aaRS and biotin synthetases"/>
    <property type="match status" value="1"/>
</dbReference>
<dbReference type="SUPFAM" id="SSF81271">
    <property type="entry name" value="TGS-like"/>
    <property type="match status" value="1"/>
</dbReference>
<dbReference type="SUPFAM" id="SSF55186">
    <property type="entry name" value="ThrRS/AlaRS common domain"/>
    <property type="match status" value="1"/>
</dbReference>
<dbReference type="PROSITE" id="PS50862">
    <property type="entry name" value="AA_TRNA_LIGASE_II"/>
    <property type="match status" value="1"/>
</dbReference>
<dbReference type="PROSITE" id="PS51880">
    <property type="entry name" value="TGS"/>
    <property type="match status" value="1"/>
</dbReference>
<organism>
    <name type="scientific">Pseudomonas syringae pv. syringae (strain B728a)</name>
    <dbReference type="NCBI Taxonomy" id="205918"/>
    <lineage>
        <taxon>Bacteria</taxon>
        <taxon>Pseudomonadati</taxon>
        <taxon>Pseudomonadota</taxon>
        <taxon>Gammaproteobacteria</taxon>
        <taxon>Pseudomonadales</taxon>
        <taxon>Pseudomonadaceae</taxon>
        <taxon>Pseudomonas</taxon>
        <taxon>Pseudomonas syringae</taxon>
    </lineage>
</organism>
<name>SYT_PSEU2</name>
<gene>
    <name evidence="1" type="primary">thrS</name>
    <name type="ordered locus">Psyr_2162</name>
</gene>
<feature type="chain" id="PRO_1000020476" description="Threonine--tRNA ligase">
    <location>
        <begin position="1"/>
        <end position="640"/>
    </location>
</feature>
<feature type="domain" description="TGS" evidence="2">
    <location>
        <begin position="1"/>
        <end position="61"/>
    </location>
</feature>
<feature type="region of interest" description="Catalytic" evidence="1">
    <location>
        <begin position="242"/>
        <end position="533"/>
    </location>
</feature>
<feature type="binding site" evidence="1">
    <location>
        <position position="333"/>
    </location>
    <ligand>
        <name>Zn(2+)</name>
        <dbReference type="ChEBI" id="CHEBI:29105"/>
    </ligand>
</feature>
<feature type="binding site" evidence="1">
    <location>
        <position position="384"/>
    </location>
    <ligand>
        <name>Zn(2+)</name>
        <dbReference type="ChEBI" id="CHEBI:29105"/>
    </ligand>
</feature>
<feature type="binding site" evidence="1">
    <location>
        <position position="510"/>
    </location>
    <ligand>
        <name>Zn(2+)</name>
        <dbReference type="ChEBI" id="CHEBI:29105"/>
    </ligand>
</feature>
<keyword id="KW-0030">Aminoacyl-tRNA synthetase</keyword>
<keyword id="KW-0067">ATP-binding</keyword>
<keyword id="KW-0963">Cytoplasm</keyword>
<keyword id="KW-0436">Ligase</keyword>
<keyword id="KW-0479">Metal-binding</keyword>
<keyword id="KW-0547">Nucleotide-binding</keyword>
<keyword id="KW-0648">Protein biosynthesis</keyword>
<keyword id="KW-0694">RNA-binding</keyword>
<keyword id="KW-0820">tRNA-binding</keyword>
<keyword id="KW-0862">Zinc</keyword>
<evidence type="ECO:0000255" key="1">
    <source>
        <dbReference type="HAMAP-Rule" id="MF_00184"/>
    </source>
</evidence>
<evidence type="ECO:0000255" key="2">
    <source>
        <dbReference type="PROSITE-ProRule" id="PRU01228"/>
    </source>
</evidence>
<reference key="1">
    <citation type="journal article" date="2005" name="Proc. Natl. Acad. Sci. U.S.A.">
        <title>Comparison of the complete genome sequences of Pseudomonas syringae pv. syringae B728a and pv. tomato DC3000.</title>
        <authorList>
            <person name="Feil H."/>
            <person name="Feil W.S."/>
            <person name="Chain P."/>
            <person name="Larimer F."/>
            <person name="Dibartolo G."/>
            <person name="Copeland A."/>
            <person name="Lykidis A."/>
            <person name="Trong S."/>
            <person name="Nolan M."/>
            <person name="Goltsman E."/>
            <person name="Thiel J."/>
            <person name="Malfatti S."/>
            <person name="Loper J.E."/>
            <person name="Lapidus A."/>
            <person name="Detter J.C."/>
            <person name="Land M."/>
            <person name="Richardson P.M."/>
            <person name="Kyrpides N.C."/>
            <person name="Ivanova N."/>
            <person name="Lindow S.E."/>
        </authorList>
    </citation>
    <scope>NUCLEOTIDE SEQUENCE [LARGE SCALE GENOMIC DNA]</scope>
    <source>
        <strain>B728a</strain>
    </source>
</reference>